<proteinExistence type="evidence at transcript level"/>
<feature type="signal peptide" evidence="3">
    <location>
        <begin position="1"/>
        <end position="16"/>
    </location>
</feature>
<feature type="chain" id="PRO_0000001198" description="Amelogenin">
    <location>
        <begin position="17"/>
        <end position="226"/>
    </location>
</feature>
<feature type="region of interest" description="Disordered" evidence="4">
    <location>
        <begin position="86"/>
        <end position="196"/>
    </location>
</feature>
<feature type="compositionally biased region" description="Low complexity" evidence="4">
    <location>
        <begin position="88"/>
        <end position="120"/>
    </location>
</feature>
<feature type="compositionally biased region" description="Low complexity" evidence="4">
    <location>
        <begin position="137"/>
        <end position="182"/>
    </location>
</feature>
<feature type="compositionally biased region" description="Pro residues" evidence="4">
    <location>
        <begin position="183"/>
        <end position="192"/>
    </location>
</feature>
<feature type="modified residue" description="Phosphoserine" evidence="2">
    <location>
        <position position="32"/>
    </location>
</feature>
<comment type="function">
    <text evidence="1">Plays a role in the biomineralization of teeth. Seems to regulate the formation of crystallites during the secretory stage of tooth enamel development. Thought to play a major role in the structural organization and mineralization of developing enamel (By similarity).</text>
</comment>
<comment type="subcellular location">
    <subcellularLocation>
        <location evidence="1">Secreted</location>
        <location evidence="1">Extracellular space</location>
        <location evidence="1">Extracellular matrix</location>
    </subcellularLocation>
</comment>
<comment type="similarity">
    <text evidence="5">Belongs to the amelogenin family.</text>
</comment>
<gene>
    <name type="primary">AMEL</name>
</gene>
<sequence length="226" mass="25379">MGTWILFACLLGTAFAMPLPPHPGHPGYINFSYEKSHSNAINIDRTALVLTPLKWYQSMIRQPYPSYGYESMGGWVHHQVIPVLSQQHPPSHTTLPPHHHIPVGPAQQPVVPQQPLMPVPGHHSMTPNQHHQPNLPPTSQQPFQQPFPTQPVQPQHHQPIQPIQPIQPIQPIQPIQPQSPLHPIQPLPPQQALPPMFSMQPIAPLLPDLPLEAWPATDKTKREEVD</sequence>
<name>AMEL_CAVPO</name>
<evidence type="ECO:0000250" key="1"/>
<evidence type="ECO:0000250" key="2">
    <source>
        <dbReference type="UniProtKB" id="P45561"/>
    </source>
</evidence>
<evidence type="ECO:0000255" key="3"/>
<evidence type="ECO:0000256" key="4">
    <source>
        <dbReference type="SAM" id="MobiDB-lite"/>
    </source>
</evidence>
<evidence type="ECO:0000305" key="5"/>
<protein>
    <recommendedName>
        <fullName>Amelogenin</fullName>
    </recommendedName>
</protein>
<keyword id="KW-0091">Biomineralization</keyword>
<keyword id="KW-0272">Extracellular matrix</keyword>
<keyword id="KW-0597">Phosphoprotein</keyword>
<keyword id="KW-1185">Reference proteome</keyword>
<keyword id="KW-0677">Repeat</keyword>
<keyword id="KW-0964">Secreted</keyword>
<keyword id="KW-0732">Signal</keyword>
<accession>Q9Z0K9</accession>
<dbReference type="EMBL" id="AJ012200">
    <property type="protein sequence ID" value="CAA09957.1"/>
    <property type="molecule type" value="mRNA"/>
</dbReference>
<dbReference type="RefSeq" id="NP_001166340.1">
    <property type="nucleotide sequence ID" value="NM_001172869.1"/>
</dbReference>
<dbReference type="FunCoup" id="Q9Z0K9">
    <property type="interactions" value="12"/>
</dbReference>
<dbReference type="STRING" id="10141.ENSCPOP00000016676"/>
<dbReference type="GeneID" id="100379562"/>
<dbReference type="KEGG" id="cpoc:100379562"/>
<dbReference type="CTD" id="265"/>
<dbReference type="eggNOG" id="ENOG502S4XP">
    <property type="taxonomic scope" value="Eukaryota"/>
</dbReference>
<dbReference type="InParanoid" id="Q9Z0K9"/>
<dbReference type="OrthoDB" id="9030267at2759"/>
<dbReference type="Proteomes" id="UP000005447">
    <property type="component" value="Unassembled WGS sequence"/>
</dbReference>
<dbReference type="GO" id="GO:0005576">
    <property type="term" value="C:extracellular region"/>
    <property type="evidence" value="ECO:0007669"/>
    <property type="project" value="UniProtKB-KW"/>
</dbReference>
<dbReference type="GO" id="GO:0030345">
    <property type="term" value="F:structural constituent of tooth enamel"/>
    <property type="evidence" value="ECO:0007669"/>
    <property type="project" value="TreeGrafter"/>
</dbReference>
<dbReference type="GO" id="GO:0070166">
    <property type="term" value="P:enamel mineralization"/>
    <property type="evidence" value="ECO:0007669"/>
    <property type="project" value="TreeGrafter"/>
</dbReference>
<dbReference type="InterPro" id="IPR004116">
    <property type="entry name" value="Amelogenin"/>
</dbReference>
<dbReference type="PANTHER" id="PTHR46794:SF2">
    <property type="entry name" value="AMELOGENIN, X ISOFORM"/>
    <property type="match status" value="1"/>
</dbReference>
<dbReference type="PANTHER" id="PTHR46794">
    <property type="entry name" value="AMELOGENIN, Y ISOFORM"/>
    <property type="match status" value="1"/>
</dbReference>
<dbReference type="Pfam" id="PF02948">
    <property type="entry name" value="Amelogenin"/>
    <property type="match status" value="2"/>
</dbReference>
<dbReference type="PRINTS" id="PR01757">
    <property type="entry name" value="AMELOGENIN"/>
</dbReference>
<dbReference type="SMART" id="SM00818">
    <property type="entry name" value="Amelogenin"/>
    <property type="match status" value="1"/>
</dbReference>
<reference key="1">
    <citation type="submission" date="1998-11" db="EMBL/GenBank/DDBJ databases">
        <title>Cloning, cDNA sequence, and splicing variants of guinea-pig amelogenin mRNA.</title>
        <authorList>
            <person name="Cerny R."/>
        </authorList>
    </citation>
    <scope>NUCLEOTIDE SEQUENCE [MRNA]</scope>
</reference>
<organism>
    <name type="scientific">Cavia porcellus</name>
    <name type="common">Guinea pig</name>
    <dbReference type="NCBI Taxonomy" id="10141"/>
    <lineage>
        <taxon>Eukaryota</taxon>
        <taxon>Metazoa</taxon>
        <taxon>Chordata</taxon>
        <taxon>Craniata</taxon>
        <taxon>Vertebrata</taxon>
        <taxon>Euteleostomi</taxon>
        <taxon>Mammalia</taxon>
        <taxon>Eutheria</taxon>
        <taxon>Euarchontoglires</taxon>
        <taxon>Glires</taxon>
        <taxon>Rodentia</taxon>
        <taxon>Hystricomorpha</taxon>
        <taxon>Caviidae</taxon>
        <taxon>Cavia</taxon>
    </lineage>
</organism>